<reference key="1">
    <citation type="journal article" date="2002" name="Nature">
        <title>The genome sequence of Schizosaccharomyces pombe.</title>
        <authorList>
            <person name="Wood V."/>
            <person name="Gwilliam R."/>
            <person name="Rajandream M.A."/>
            <person name="Lyne M.H."/>
            <person name="Lyne R."/>
            <person name="Stewart A."/>
            <person name="Sgouros J.G."/>
            <person name="Peat N."/>
            <person name="Hayles J."/>
            <person name="Baker S.G."/>
            <person name="Basham D."/>
            <person name="Bowman S."/>
            <person name="Brooks K."/>
            <person name="Brown D."/>
            <person name="Brown S."/>
            <person name="Chillingworth T."/>
            <person name="Churcher C.M."/>
            <person name="Collins M."/>
            <person name="Connor R."/>
            <person name="Cronin A."/>
            <person name="Davis P."/>
            <person name="Feltwell T."/>
            <person name="Fraser A."/>
            <person name="Gentles S."/>
            <person name="Goble A."/>
            <person name="Hamlin N."/>
            <person name="Harris D.E."/>
            <person name="Hidalgo J."/>
            <person name="Hodgson G."/>
            <person name="Holroyd S."/>
            <person name="Hornsby T."/>
            <person name="Howarth S."/>
            <person name="Huckle E.J."/>
            <person name="Hunt S."/>
            <person name="Jagels K."/>
            <person name="James K.D."/>
            <person name="Jones L."/>
            <person name="Jones M."/>
            <person name="Leather S."/>
            <person name="McDonald S."/>
            <person name="McLean J."/>
            <person name="Mooney P."/>
            <person name="Moule S."/>
            <person name="Mungall K.L."/>
            <person name="Murphy L.D."/>
            <person name="Niblett D."/>
            <person name="Odell C."/>
            <person name="Oliver K."/>
            <person name="O'Neil S."/>
            <person name="Pearson D."/>
            <person name="Quail M.A."/>
            <person name="Rabbinowitsch E."/>
            <person name="Rutherford K.M."/>
            <person name="Rutter S."/>
            <person name="Saunders D."/>
            <person name="Seeger K."/>
            <person name="Sharp S."/>
            <person name="Skelton J."/>
            <person name="Simmonds M.N."/>
            <person name="Squares R."/>
            <person name="Squares S."/>
            <person name="Stevens K."/>
            <person name="Taylor K."/>
            <person name="Taylor R.G."/>
            <person name="Tivey A."/>
            <person name="Walsh S.V."/>
            <person name="Warren T."/>
            <person name="Whitehead S."/>
            <person name="Woodward J.R."/>
            <person name="Volckaert G."/>
            <person name="Aert R."/>
            <person name="Robben J."/>
            <person name="Grymonprez B."/>
            <person name="Weltjens I."/>
            <person name="Vanstreels E."/>
            <person name="Rieger M."/>
            <person name="Schaefer M."/>
            <person name="Mueller-Auer S."/>
            <person name="Gabel C."/>
            <person name="Fuchs M."/>
            <person name="Duesterhoeft A."/>
            <person name="Fritzc C."/>
            <person name="Holzer E."/>
            <person name="Moestl D."/>
            <person name="Hilbert H."/>
            <person name="Borzym K."/>
            <person name="Langer I."/>
            <person name="Beck A."/>
            <person name="Lehrach H."/>
            <person name="Reinhardt R."/>
            <person name="Pohl T.M."/>
            <person name="Eger P."/>
            <person name="Zimmermann W."/>
            <person name="Wedler H."/>
            <person name="Wambutt R."/>
            <person name="Purnelle B."/>
            <person name="Goffeau A."/>
            <person name="Cadieu E."/>
            <person name="Dreano S."/>
            <person name="Gloux S."/>
            <person name="Lelaure V."/>
            <person name="Mottier S."/>
            <person name="Galibert F."/>
            <person name="Aves S.J."/>
            <person name="Xiang Z."/>
            <person name="Hunt C."/>
            <person name="Moore K."/>
            <person name="Hurst S.M."/>
            <person name="Lucas M."/>
            <person name="Rochet M."/>
            <person name="Gaillardin C."/>
            <person name="Tallada V.A."/>
            <person name="Garzon A."/>
            <person name="Thode G."/>
            <person name="Daga R.R."/>
            <person name="Cruzado L."/>
            <person name="Jimenez J."/>
            <person name="Sanchez M."/>
            <person name="del Rey F."/>
            <person name="Benito J."/>
            <person name="Dominguez A."/>
            <person name="Revuelta J.L."/>
            <person name="Moreno S."/>
            <person name="Armstrong J."/>
            <person name="Forsburg S.L."/>
            <person name="Cerutti L."/>
            <person name="Lowe T."/>
            <person name="McCombie W.R."/>
            <person name="Paulsen I."/>
            <person name="Potashkin J."/>
            <person name="Shpakovski G.V."/>
            <person name="Ussery D."/>
            <person name="Barrell B.G."/>
            <person name="Nurse P."/>
        </authorList>
    </citation>
    <scope>NUCLEOTIDE SEQUENCE [LARGE SCALE GENOMIC DNA]</scope>
    <source>
        <strain>972 / ATCC 24843</strain>
    </source>
</reference>
<sequence>MSYYYETEEVNNNPELKSNFPWLADRIHEGRSSIFHALGYVGLKTENAFGWFLSTERKTISTAKNEVFSSDERKLPGVAYVVVGGMAGNIFARNRIAPARWLITSLSTAATFMFCFPKTSKNIGAFVEKRFPAIRKQRMLVLEQTQKNIQNAQKSMTSAVEGVQKHYENAVKKIKGD</sequence>
<keyword id="KW-1185">Reference proteome</keyword>
<accession>O94578</accession>
<gene>
    <name type="ORF">SPCC1442.05c</name>
</gene>
<dbReference type="EMBL" id="CU329672">
    <property type="protein sequence ID" value="CAA21439.1"/>
    <property type="molecule type" value="Genomic_DNA"/>
</dbReference>
<dbReference type="PIR" id="T40970">
    <property type="entry name" value="T40970"/>
</dbReference>
<dbReference type="BioGRID" id="275437">
    <property type="interactions" value="9"/>
</dbReference>
<dbReference type="FunCoup" id="O94578">
    <property type="interactions" value="34"/>
</dbReference>
<dbReference type="STRING" id="284812.O94578"/>
<dbReference type="iPTMnet" id="O94578"/>
<dbReference type="PaxDb" id="4896-SPCC1442.05c.1"/>
<dbReference type="EnsemblFungi" id="SPCC1442.05c.1">
    <property type="protein sequence ID" value="SPCC1442.05c.1:pep"/>
    <property type="gene ID" value="SPCC1442.05c"/>
</dbReference>
<dbReference type="KEGG" id="spo:2538857"/>
<dbReference type="PomBase" id="SPCC1442.05c"/>
<dbReference type="VEuPathDB" id="FungiDB:SPCC1442.05c"/>
<dbReference type="HOGENOM" id="CLU_1518718_0_0_1"/>
<dbReference type="InParanoid" id="O94578"/>
<dbReference type="OMA" id="RIAPARW"/>
<dbReference type="PRO" id="PR:O94578"/>
<dbReference type="Proteomes" id="UP000002485">
    <property type="component" value="Chromosome III"/>
</dbReference>
<dbReference type="GO" id="GO:0061617">
    <property type="term" value="C:MICOS complex"/>
    <property type="evidence" value="ECO:0000269"/>
    <property type="project" value="PomBase"/>
</dbReference>
<dbReference type="GO" id="GO:0044284">
    <property type="term" value="C:mitochondrial crista junction"/>
    <property type="evidence" value="ECO:0000269"/>
    <property type="project" value="PomBase"/>
</dbReference>
<dbReference type="GO" id="GO:0042407">
    <property type="term" value="P:cristae formation"/>
    <property type="evidence" value="ECO:0000269"/>
    <property type="project" value="PomBase"/>
</dbReference>
<dbReference type="InterPro" id="IPR019166">
    <property type="entry name" value="MIC26/MIC27"/>
</dbReference>
<dbReference type="InterPro" id="IPR033181">
    <property type="entry name" value="Mic26_fungi"/>
</dbReference>
<dbReference type="PANTHER" id="PTHR28268">
    <property type="entry name" value="MICOS SUBUNIT MIC26"/>
    <property type="match status" value="1"/>
</dbReference>
<dbReference type="PANTHER" id="PTHR28268:SF1">
    <property type="entry name" value="MICOS SUBUNIT MIC26"/>
    <property type="match status" value="1"/>
</dbReference>
<dbReference type="Pfam" id="PF09769">
    <property type="entry name" value="ApoO"/>
    <property type="match status" value="1"/>
</dbReference>
<name>YQ75_SCHPO</name>
<protein>
    <recommendedName>
        <fullName>Uncharacterized protein C1442.05c</fullName>
    </recommendedName>
</protein>
<proteinExistence type="predicted"/>
<feature type="chain" id="PRO_0000353133" description="Uncharacterized protein C1442.05c">
    <location>
        <begin position="1"/>
        <end position="177"/>
    </location>
</feature>
<organism>
    <name type="scientific">Schizosaccharomyces pombe (strain 972 / ATCC 24843)</name>
    <name type="common">Fission yeast</name>
    <dbReference type="NCBI Taxonomy" id="284812"/>
    <lineage>
        <taxon>Eukaryota</taxon>
        <taxon>Fungi</taxon>
        <taxon>Dikarya</taxon>
        <taxon>Ascomycota</taxon>
        <taxon>Taphrinomycotina</taxon>
        <taxon>Schizosaccharomycetes</taxon>
        <taxon>Schizosaccharomycetales</taxon>
        <taxon>Schizosaccharomycetaceae</taxon>
        <taxon>Schizosaccharomyces</taxon>
    </lineage>
</organism>